<gene>
    <name type="primary">pyrI</name>
    <name type="ordered locus">MJ1406</name>
</gene>
<dbReference type="EMBL" id="L77117">
    <property type="protein sequence ID" value="AAB99414.1"/>
    <property type="molecule type" value="Genomic_DNA"/>
</dbReference>
<dbReference type="PIR" id="E64475">
    <property type="entry name" value="E64475"/>
</dbReference>
<dbReference type="PDB" id="2YWW">
    <property type="method" value="X-ray"/>
    <property type="resolution" value="2.00 A"/>
    <property type="chains" value="A/B=1-149"/>
</dbReference>
<dbReference type="PDBsum" id="2YWW"/>
<dbReference type="SMR" id="Q58801"/>
<dbReference type="FunCoup" id="Q58801">
    <property type="interactions" value="112"/>
</dbReference>
<dbReference type="STRING" id="243232.MJ_1406"/>
<dbReference type="PaxDb" id="243232-MJ_1406"/>
<dbReference type="EnsemblBacteria" id="AAB99414">
    <property type="protein sequence ID" value="AAB99414"/>
    <property type="gene ID" value="MJ_1406"/>
</dbReference>
<dbReference type="KEGG" id="mja:MJ_1406"/>
<dbReference type="eggNOG" id="arCOG04229">
    <property type="taxonomic scope" value="Archaea"/>
</dbReference>
<dbReference type="HOGENOM" id="CLU_128576_0_0_2"/>
<dbReference type="InParanoid" id="Q58801"/>
<dbReference type="PhylomeDB" id="Q58801"/>
<dbReference type="BRENDA" id="2.1.3.2">
    <property type="organism ID" value="3260"/>
</dbReference>
<dbReference type="EvolutionaryTrace" id="Q58801"/>
<dbReference type="Proteomes" id="UP000000805">
    <property type="component" value="Chromosome"/>
</dbReference>
<dbReference type="GO" id="GO:0009347">
    <property type="term" value="C:aspartate carbamoyltransferase complex"/>
    <property type="evidence" value="ECO:0000318"/>
    <property type="project" value="GO_Central"/>
</dbReference>
<dbReference type="GO" id="GO:0046872">
    <property type="term" value="F:metal ion binding"/>
    <property type="evidence" value="ECO:0007669"/>
    <property type="project" value="UniProtKB-KW"/>
</dbReference>
<dbReference type="GO" id="GO:0006207">
    <property type="term" value="P:'de novo' pyrimidine nucleobase biosynthetic process"/>
    <property type="evidence" value="ECO:0000318"/>
    <property type="project" value="GO_Central"/>
</dbReference>
<dbReference type="GO" id="GO:0006221">
    <property type="term" value="P:pyrimidine nucleotide biosynthetic process"/>
    <property type="evidence" value="ECO:0007669"/>
    <property type="project" value="UniProtKB-UniRule"/>
</dbReference>
<dbReference type="Gene3D" id="2.30.30.20">
    <property type="entry name" value="Aspartate carbamoyltransferase regulatory subunit, C-terminal domain"/>
    <property type="match status" value="1"/>
</dbReference>
<dbReference type="Gene3D" id="3.30.70.140">
    <property type="entry name" value="Aspartate carbamoyltransferase regulatory subunit, N-terminal domain"/>
    <property type="match status" value="1"/>
</dbReference>
<dbReference type="HAMAP" id="MF_00002">
    <property type="entry name" value="Asp_carb_tr_reg"/>
    <property type="match status" value="1"/>
</dbReference>
<dbReference type="InterPro" id="IPR020545">
    <property type="entry name" value="Asp_carbamoyltransf_reg_N"/>
</dbReference>
<dbReference type="InterPro" id="IPR002801">
    <property type="entry name" value="Asp_carbamoylTrfase_reg"/>
</dbReference>
<dbReference type="InterPro" id="IPR020542">
    <property type="entry name" value="Asp_carbamoyltrfase_reg_C"/>
</dbReference>
<dbReference type="InterPro" id="IPR036792">
    <property type="entry name" value="Asp_carbatrfase_reg_C_sf"/>
</dbReference>
<dbReference type="InterPro" id="IPR036793">
    <property type="entry name" value="Asp_carbatrfase_reg_N_sf"/>
</dbReference>
<dbReference type="NCBIfam" id="TIGR00240">
    <property type="entry name" value="ATCase_reg"/>
    <property type="match status" value="1"/>
</dbReference>
<dbReference type="PANTHER" id="PTHR35805">
    <property type="entry name" value="ASPARTATE CARBAMOYLTRANSFERASE REGULATORY CHAIN"/>
    <property type="match status" value="1"/>
</dbReference>
<dbReference type="PANTHER" id="PTHR35805:SF1">
    <property type="entry name" value="ASPARTATE CARBAMOYLTRANSFERASE REGULATORY CHAIN"/>
    <property type="match status" value="1"/>
</dbReference>
<dbReference type="Pfam" id="PF01948">
    <property type="entry name" value="PyrI"/>
    <property type="match status" value="1"/>
</dbReference>
<dbReference type="Pfam" id="PF02748">
    <property type="entry name" value="PyrI_C"/>
    <property type="match status" value="1"/>
</dbReference>
<dbReference type="SUPFAM" id="SSF57825">
    <property type="entry name" value="Aspartate carbamoyltransferase, Regulatory-chain, C-terminal domain"/>
    <property type="match status" value="1"/>
</dbReference>
<dbReference type="SUPFAM" id="SSF54893">
    <property type="entry name" value="Aspartate carbamoyltransferase, Regulatory-chain, N-terminal domain"/>
    <property type="match status" value="1"/>
</dbReference>
<keyword id="KW-0002">3D-structure</keyword>
<keyword id="KW-0479">Metal-binding</keyword>
<keyword id="KW-0665">Pyrimidine biosynthesis</keyword>
<keyword id="KW-1185">Reference proteome</keyword>
<keyword id="KW-0862">Zinc</keyword>
<proteinExistence type="evidence at protein level"/>
<sequence length="149" mass="16907">MIPMEELKVKKITNGTVIDHIDAGKALMVFKVLNVPKETSVMIAINVPSKKKGKKDILKIEGIELKKEDVDKISLISPDVTINIIRNGKVVEKLKPQIPDEIEGTLKCTNPNCITNKEKVRGKFKIESKNPLKIRCYYCEKFLNEVIFE</sequence>
<name>PYRI_METJA</name>
<comment type="function">
    <text evidence="1">Involved in allosteric regulation of aspartate carbamoyltransferase.</text>
</comment>
<comment type="cofactor">
    <cofactor evidence="1">
        <name>Zn(2+)</name>
        <dbReference type="ChEBI" id="CHEBI:29105"/>
    </cofactor>
    <text evidence="1">Binds 1 zinc ion per subunit.</text>
</comment>
<comment type="subunit">
    <text>Heterododecamer (2C3:3R2) of six catalytic PyrB chains organized as two trimers (C3), and six regulatory PyrI chains organized as three dimers (R2).</text>
</comment>
<comment type="similarity">
    <text evidence="2">Belongs to the PyrI family.</text>
</comment>
<reference key="1">
    <citation type="journal article" date="1996" name="Science">
        <title>Complete genome sequence of the methanogenic archaeon, Methanococcus jannaschii.</title>
        <authorList>
            <person name="Bult C.J."/>
            <person name="White O."/>
            <person name="Olsen G.J."/>
            <person name="Zhou L."/>
            <person name="Fleischmann R.D."/>
            <person name="Sutton G.G."/>
            <person name="Blake J.A."/>
            <person name="FitzGerald L.M."/>
            <person name="Clayton R.A."/>
            <person name="Gocayne J.D."/>
            <person name="Kerlavage A.R."/>
            <person name="Dougherty B.A."/>
            <person name="Tomb J.-F."/>
            <person name="Adams M.D."/>
            <person name="Reich C.I."/>
            <person name="Overbeek R."/>
            <person name="Kirkness E.F."/>
            <person name="Weinstock K.G."/>
            <person name="Merrick J.M."/>
            <person name="Glodek A."/>
            <person name="Scott J.L."/>
            <person name="Geoghagen N.S.M."/>
            <person name="Weidman J.F."/>
            <person name="Fuhrmann J.L."/>
            <person name="Nguyen D."/>
            <person name="Utterback T.R."/>
            <person name="Kelley J.M."/>
            <person name="Peterson J.D."/>
            <person name="Sadow P.W."/>
            <person name="Hanna M.C."/>
            <person name="Cotton M.D."/>
            <person name="Roberts K.M."/>
            <person name="Hurst M.A."/>
            <person name="Kaine B.P."/>
            <person name="Borodovsky M."/>
            <person name="Klenk H.-P."/>
            <person name="Fraser C.M."/>
            <person name="Smith H.O."/>
            <person name="Woese C.R."/>
            <person name="Venter J.C."/>
        </authorList>
    </citation>
    <scope>NUCLEOTIDE SEQUENCE [LARGE SCALE GENOMIC DNA]</scope>
    <source>
        <strain>ATCC 43067 / DSM 2661 / JAL-1 / JCM 10045 / NBRC 100440</strain>
    </source>
</reference>
<reference key="2">
    <citation type="journal article" date="2000" name="J. Biol. Chem.">
        <title>Characterization of the aspartate transcarbamoylase from Methanococcus jannaschii.</title>
        <authorList>
            <person name="Hack E.S."/>
            <person name="Vorobyova T."/>
            <person name="Sakash J.B."/>
            <person name="West J.M."/>
            <person name="Macol C.P."/>
            <person name="Herve G."/>
            <person name="Williams M.K."/>
            <person name="Kantrowitz E.R."/>
        </authorList>
    </citation>
    <scope>CHARACTERIZATION</scope>
</reference>
<accession>Q58801</accession>
<organism>
    <name type="scientific">Methanocaldococcus jannaschii (strain ATCC 43067 / DSM 2661 / JAL-1 / JCM 10045 / NBRC 100440)</name>
    <name type="common">Methanococcus jannaschii</name>
    <dbReference type="NCBI Taxonomy" id="243232"/>
    <lineage>
        <taxon>Archaea</taxon>
        <taxon>Methanobacteriati</taxon>
        <taxon>Methanobacteriota</taxon>
        <taxon>Methanomada group</taxon>
        <taxon>Methanococci</taxon>
        <taxon>Methanococcales</taxon>
        <taxon>Methanocaldococcaceae</taxon>
        <taxon>Methanocaldococcus</taxon>
    </lineage>
</organism>
<evidence type="ECO:0000250" key="1"/>
<evidence type="ECO:0000305" key="2"/>
<evidence type="ECO:0007829" key="3">
    <source>
        <dbReference type="PDB" id="2YWW"/>
    </source>
</evidence>
<feature type="chain" id="PRO_0000142331" description="Aspartate carbamoyltransferase regulatory chain">
    <location>
        <begin position="1"/>
        <end position="149"/>
    </location>
</feature>
<feature type="binding site" evidence="1">
    <location>
        <position position="108"/>
    </location>
    <ligand>
        <name>Zn(2+)</name>
        <dbReference type="ChEBI" id="CHEBI:29105"/>
    </ligand>
</feature>
<feature type="binding site" evidence="1">
    <location>
        <position position="113"/>
    </location>
    <ligand>
        <name>Zn(2+)</name>
        <dbReference type="ChEBI" id="CHEBI:29105"/>
    </ligand>
</feature>
<feature type="binding site" evidence="1">
    <location>
        <position position="136"/>
    </location>
    <ligand>
        <name>Zn(2+)</name>
        <dbReference type="ChEBI" id="CHEBI:29105"/>
    </ligand>
</feature>
<feature type="binding site" evidence="1">
    <location>
        <position position="139"/>
    </location>
    <ligand>
        <name>Zn(2+)</name>
        <dbReference type="ChEBI" id="CHEBI:29105"/>
    </ligand>
</feature>
<feature type="strand" evidence="3">
    <location>
        <begin position="13"/>
        <end position="22"/>
    </location>
</feature>
<feature type="helix" evidence="3">
    <location>
        <begin position="26"/>
        <end position="33"/>
    </location>
</feature>
<feature type="strand" evidence="3">
    <location>
        <begin position="41"/>
        <end position="49"/>
    </location>
</feature>
<feature type="turn" evidence="3">
    <location>
        <begin position="50"/>
        <end position="52"/>
    </location>
</feature>
<feature type="strand" evidence="3">
    <location>
        <begin position="53"/>
        <end position="61"/>
    </location>
</feature>
<feature type="helix" evidence="3">
    <location>
        <begin position="67"/>
        <end position="76"/>
    </location>
</feature>
<feature type="strand" evidence="3">
    <location>
        <begin position="81"/>
        <end position="86"/>
    </location>
</feature>
<feature type="strand" evidence="3">
    <location>
        <begin position="89"/>
        <end position="94"/>
    </location>
</feature>
<feature type="strand" evidence="3">
    <location>
        <begin position="100"/>
        <end position="106"/>
    </location>
</feature>
<feature type="helix" evidence="3">
    <location>
        <begin position="114"/>
        <end position="116"/>
    </location>
</feature>
<feature type="strand" evidence="3">
    <location>
        <begin position="123"/>
        <end position="128"/>
    </location>
</feature>
<feature type="turn" evidence="3">
    <location>
        <begin position="129"/>
        <end position="132"/>
    </location>
</feature>
<feature type="strand" evidence="3">
    <location>
        <begin position="133"/>
        <end position="136"/>
    </location>
</feature>
<feature type="turn" evidence="3">
    <location>
        <begin position="137"/>
        <end position="139"/>
    </location>
</feature>
<protein>
    <recommendedName>
        <fullName>Aspartate carbamoyltransferase regulatory chain</fullName>
    </recommendedName>
</protein>